<accession>Q9HKT0</accession>
<gene>
    <name evidence="1" type="primary">srp54</name>
    <name type="ordered locus">Ta0515</name>
</gene>
<name>SRP54_THEAC</name>
<organism>
    <name type="scientific">Thermoplasma acidophilum (strain ATCC 25905 / DSM 1728 / JCM 9062 / NBRC 15155 / AMRC-C165)</name>
    <dbReference type="NCBI Taxonomy" id="273075"/>
    <lineage>
        <taxon>Archaea</taxon>
        <taxon>Methanobacteriati</taxon>
        <taxon>Thermoplasmatota</taxon>
        <taxon>Thermoplasmata</taxon>
        <taxon>Thermoplasmatales</taxon>
        <taxon>Thermoplasmataceae</taxon>
        <taxon>Thermoplasma</taxon>
    </lineage>
</organism>
<keyword id="KW-0963">Cytoplasm</keyword>
<keyword id="KW-0342">GTP-binding</keyword>
<keyword id="KW-0378">Hydrolase</keyword>
<keyword id="KW-0547">Nucleotide-binding</keyword>
<keyword id="KW-1185">Reference proteome</keyword>
<keyword id="KW-0687">Ribonucleoprotein</keyword>
<keyword id="KW-0694">RNA-binding</keyword>
<keyword id="KW-0733">Signal recognition particle</keyword>
<sequence length="456" mass="51080">MVLESFSASLRETIRKITGSSYIDKETVKEISKDLQRILLKADVNVKTVLQVTKEMERRALEEKPPAGMAHQDYMVRIIYEELLKILGEPSNVKLKPQTIMLVGLYGNGKTTTAGKLARFFAKKGLNSGLIAADVHRYAAYDQLKQIASEVNAKFYGDQSEKDPVRLIKHGLEQLKDVAVKIIDTSGRDSMDAELFDEIRRIKEAVAPDEVLMIIDATMGQQAGPEAKAFNDAIGVTGIIITKMDGTAKGGGALSAVAEIHVPIYFIGTGEHMDDLEVFDPKKFLSRLLGLGDLESLFETVQEADITEEEAQESFEKLMTGKFNLKDMYDVWEKFSKPGLMKKLVDALPLARIPGSQKIDDSKIQSAEDKLRMYRIIMDSMTFEELENPEIINAKRITRIARGAGVREEDVRMLLKEFKAMKNNMKMMKGNRGLKKMLQANFRSGNFGLEDLGIKE</sequence>
<comment type="function">
    <text evidence="1">Involved in targeting and insertion of nascent membrane proteins into the cytoplasmic membrane. Binds to the hydrophobic signal sequence of the ribosome-nascent chain (RNC) as it emerges from the ribosomes. The SRP-RNC complex is then targeted to the cytoplasmic membrane where it interacts with the SRP receptor FtsY.</text>
</comment>
<comment type="catalytic activity">
    <reaction evidence="1">
        <text>GTP + H2O = GDP + phosphate + H(+)</text>
        <dbReference type="Rhea" id="RHEA:19669"/>
        <dbReference type="ChEBI" id="CHEBI:15377"/>
        <dbReference type="ChEBI" id="CHEBI:15378"/>
        <dbReference type="ChEBI" id="CHEBI:37565"/>
        <dbReference type="ChEBI" id="CHEBI:43474"/>
        <dbReference type="ChEBI" id="CHEBI:58189"/>
        <dbReference type="EC" id="3.6.5.4"/>
    </reaction>
</comment>
<comment type="subunit">
    <text evidence="1">Part of the signal recognition particle protein translocation system, which is composed of SRP and FtsY. Archaeal SRP consists of a 7S RNA molecule of 300 nucleotides and two protein subunits: SRP54 and SRP19.</text>
</comment>
<comment type="subcellular location">
    <subcellularLocation>
        <location evidence="1">Cytoplasm</location>
    </subcellularLocation>
    <text evidence="1">The SRP-RNC complex is targeted to the cytoplasmic membrane.</text>
</comment>
<comment type="domain">
    <text evidence="1">Composed of three domains: the N-terminal N domain, which is responsible for interactions with the ribosome, the central G domain, which binds GTP, and the C-terminal M domain, which binds the RNA and the signal sequence of the RNC.</text>
</comment>
<comment type="similarity">
    <text evidence="1">Belongs to the GTP-binding SRP family. SRP54 subfamily.</text>
</comment>
<protein>
    <recommendedName>
        <fullName evidence="1">Signal recognition particle 54 kDa protein</fullName>
        <shortName evidence="1">SRP54</shortName>
        <ecNumber evidence="1">3.6.5.4</ecNumber>
    </recommendedName>
</protein>
<dbReference type="EC" id="3.6.5.4" evidence="1"/>
<dbReference type="EMBL" id="AL445064">
    <property type="protein sequence ID" value="CAC11655.1"/>
    <property type="molecule type" value="Genomic_DNA"/>
</dbReference>
<dbReference type="RefSeq" id="WP_010900940.1">
    <property type="nucleotide sequence ID" value="NC_002578.1"/>
</dbReference>
<dbReference type="SMR" id="Q9HKT0"/>
<dbReference type="FunCoup" id="Q9HKT0">
    <property type="interactions" value="194"/>
</dbReference>
<dbReference type="STRING" id="273075.gene:9571733"/>
<dbReference type="PaxDb" id="273075-Ta0515"/>
<dbReference type="EnsemblBacteria" id="CAC11655">
    <property type="protein sequence ID" value="CAC11655"/>
    <property type="gene ID" value="CAC11655"/>
</dbReference>
<dbReference type="KEGG" id="tac:Ta0515"/>
<dbReference type="eggNOG" id="arCOG01228">
    <property type="taxonomic scope" value="Archaea"/>
</dbReference>
<dbReference type="HOGENOM" id="CLU_009301_6_0_2"/>
<dbReference type="InParanoid" id="Q9HKT0"/>
<dbReference type="OrthoDB" id="52849at2157"/>
<dbReference type="Proteomes" id="UP000001024">
    <property type="component" value="Chromosome"/>
</dbReference>
<dbReference type="GO" id="GO:0048500">
    <property type="term" value="C:signal recognition particle"/>
    <property type="evidence" value="ECO:0007669"/>
    <property type="project" value="UniProtKB-UniRule"/>
</dbReference>
<dbReference type="GO" id="GO:0008312">
    <property type="term" value="F:7S RNA binding"/>
    <property type="evidence" value="ECO:0007669"/>
    <property type="project" value="UniProtKB-UniRule"/>
</dbReference>
<dbReference type="GO" id="GO:0005525">
    <property type="term" value="F:GTP binding"/>
    <property type="evidence" value="ECO:0007669"/>
    <property type="project" value="UniProtKB-UniRule"/>
</dbReference>
<dbReference type="GO" id="GO:0003924">
    <property type="term" value="F:GTPase activity"/>
    <property type="evidence" value="ECO:0007669"/>
    <property type="project" value="UniProtKB-UniRule"/>
</dbReference>
<dbReference type="GO" id="GO:0006614">
    <property type="term" value="P:SRP-dependent cotranslational protein targeting to membrane"/>
    <property type="evidence" value="ECO:0007669"/>
    <property type="project" value="InterPro"/>
</dbReference>
<dbReference type="CDD" id="cd17875">
    <property type="entry name" value="SRP54_G"/>
    <property type="match status" value="1"/>
</dbReference>
<dbReference type="Gene3D" id="3.40.50.300">
    <property type="entry name" value="P-loop containing nucleotide triphosphate hydrolases"/>
    <property type="match status" value="1"/>
</dbReference>
<dbReference type="Gene3D" id="1.20.120.140">
    <property type="entry name" value="Signal recognition particle SRP54, nucleotide-binding domain"/>
    <property type="match status" value="1"/>
</dbReference>
<dbReference type="Gene3D" id="1.10.260.30">
    <property type="entry name" value="Signal recognition particle, SRP54 subunit, M-domain"/>
    <property type="match status" value="1"/>
</dbReference>
<dbReference type="HAMAP" id="MF_00306">
    <property type="entry name" value="SRP54"/>
    <property type="match status" value="1"/>
</dbReference>
<dbReference type="InterPro" id="IPR027417">
    <property type="entry name" value="P-loop_NTPase"/>
</dbReference>
<dbReference type="InterPro" id="IPR036891">
    <property type="entry name" value="Signal_recog_part_SRP54_M_sf"/>
</dbReference>
<dbReference type="InterPro" id="IPR013822">
    <property type="entry name" value="Signal_recog_particl_SRP54_hlx"/>
</dbReference>
<dbReference type="InterPro" id="IPR004125">
    <property type="entry name" value="Signal_recog_particle_SRP54_M"/>
</dbReference>
<dbReference type="InterPro" id="IPR036225">
    <property type="entry name" value="SRP/SRP_N"/>
</dbReference>
<dbReference type="InterPro" id="IPR022941">
    <property type="entry name" value="SRP54"/>
</dbReference>
<dbReference type="InterPro" id="IPR000897">
    <property type="entry name" value="SRP54_GTPase_dom"/>
</dbReference>
<dbReference type="InterPro" id="IPR042101">
    <property type="entry name" value="SRP54_N_sf"/>
</dbReference>
<dbReference type="PANTHER" id="PTHR11564">
    <property type="entry name" value="SIGNAL RECOGNITION PARTICLE 54K PROTEIN SRP54"/>
    <property type="match status" value="1"/>
</dbReference>
<dbReference type="PANTHER" id="PTHR11564:SF5">
    <property type="entry name" value="SIGNAL RECOGNITION PARTICLE SUBUNIT SRP54"/>
    <property type="match status" value="1"/>
</dbReference>
<dbReference type="Pfam" id="PF00448">
    <property type="entry name" value="SRP54"/>
    <property type="match status" value="1"/>
</dbReference>
<dbReference type="Pfam" id="PF02881">
    <property type="entry name" value="SRP54_N"/>
    <property type="match status" value="1"/>
</dbReference>
<dbReference type="Pfam" id="PF02978">
    <property type="entry name" value="SRP_SPB"/>
    <property type="match status" value="1"/>
</dbReference>
<dbReference type="SMART" id="SM00962">
    <property type="entry name" value="SRP54"/>
    <property type="match status" value="1"/>
</dbReference>
<dbReference type="SMART" id="SM00963">
    <property type="entry name" value="SRP54_N"/>
    <property type="match status" value="1"/>
</dbReference>
<dbReference type="SUPFAM" id="SSF47364">
    <property type="entry name" value="Domain of the SRP/SRP receptor G-proteins"/>
    <property type="match status" value="1"/>
</dbReference>
<dbReference type="SUPFAM" id="SSF52540">
    <property type="entry name" value="P-loop containing nucleoside triphosphate hydrolases"/>
    <property type="match status" value="1"/>
</dbReference>
<dbReference type="SUPFAM" id="SSF47446">
    <property type="entry name" value="Signal peptide-binding domain"/>
    <property type="match status" value="1"/>
</dbReference>
<dbReference type="PROSITE" id="PS00300">
    <property type="entry name" value="SRP54"/>
    <property type="match status" value="1"/>
</dbReference>
<reference key="1">
    <citation type="journal article" date="2000" name="Nature">
        <title>The genome sequence of the thermoacidophilic scavenger Thermoplasma acidophilum.</title>
        <authorList>
            <person name="Ruepp A."/>
            <person name="Graml W."/>
            <person name="Santos-Martinez M.-L."/>
            <person name="Koretke K.K."/>
            <person name="Volker C."/>
            <person name="Mewes H.-W."/>
            <person name="Frishman D."/>
            <person name="Stocker S."/>
            <person name="Lupas A.N."/>
            <person name="Baumeister W."/>
        </authorList>
    </citation>
    <scope>NUCLEOTIDE SEQUENCE [LARGE SCALE GENOMIC DNA]</scope>
    <source>
        <strain>ATCC 25905 / DSM 1728 / JCM 9062 / NBRC 15155 / AMRC-C165</strain>
    </source>
</reference>
<feature type="chain" id="PRO_0000101189" description="Signal recognition particle 54 kDa protein">
    <location>
        <begin position="1"/>
        <end position="456"/>
    </location>
</feature>
<feature type="binding site" evidence="1">
    <location>
        <begin position="104"/>
        <end position="111"/>
    </location>
    <ligand>
        <name>GTP</name>
        <dbReference type="ChEBI" id="CHEBI:37565"/>
    </ligand>
</feature>
<feature type="binding site" evidence="1">
    <location>
        <begin position="184"/>
        <end position="188"/>
    </location>
    <ligand>
        <name>GTP</name>
        <dbReference type="ChEBI" id="CHEBI:37565"/>
    </ligand>
</feature>
<feature type="binding site" evidence="1">
    <location>
        <begin position="242"/>
        <end position="245"/>
    </location>
    <ligand>
        <name>GTP</name>
        <dbReference type="ChEBI" id="CHEBI:37565"/>
    </ligand>
</feature>
<evidence type="ECO:0000255" key="1">
    <source>
        <dbReference type="HAMAP-Rule" id="MF_00306"/>
    </source>
</evidence>
<proteinExistence type="inferred from homology"/>